<keyword id="KW-0002">3D-structure</keyword>
<keyword id="KW-0209">Deafness</keyword>
<keyword id="KW-0219">Diabetes mellitus</keyword>
<keyword id="KW-0903">Direct protein sequencing</keyword>
<keyword id="KW-1015">Disulfide bond</keyword>
<keyword id="KW-0242">Dwarfism</keyword>
<keyword id="KW-0256">Endoplasmic reticulum</keyword>
<keyword id="KW-0325">Glycoprotein</keyword>
<keyword id="KW-0339">Growth factor</keyword>
<keyword id="KW-0446">Lipid-binding</keyword>
<keyword id="KW-0597">Phosphoprotein</keyword>
<keyword id="KW-1267">Proteomics identification</keyword>
<keyword id="KW-1185">Reference proteome</keyword>
<keyword id="KW-0703">Sarcoplasmic reticulum</keyword>
<keyword id="KW-0964">Secreted</keyword>
<keyword id="KW-0730">Sialic acid</keyword>
<keyword id="KW-0732">Signal</keyword>
<keyword id="KW-0346">Stress response</keyword>
<keyword id="KW-0834">Unfolded protein response</keyword>
<reference key="1">
    <citation type="journal article" date="1996" name="Oncogene">
        <title>A gene from human chromosomal band 3p21.1 encodes a highly conserved arginine-rich protein and is mutated in renal cell carcinomas.</title>
        <authorList>
            <person name="Shridhar V."/>
            <person name="Rivard S."/>
            <person name="Shridhar R."/>
            <person name="Mullins C."/>
            <person name="Bostick L."/>
            <person name="Sakr W."/>
            <person name="Grignon D."/>
            <person name="Miller O.J."/>
            <person name="Smith D.I."/>
        </authorList>
    </citation>
    <scope>NUCLEOTIDE SEQUENCE [MRNA]</scope>
    <scope>DISCUSSION OF A PUTATIVE CANCER VARIANT</scope>
</reference>
<reference key="2">
    <citation type="submission" date="2003-05" db="EMBL/GenBank/DDBJ databases">
        <title>Cloning of human full-length CDSs in BD Creator(TM) system donor vector.</title>
        <authorList>
            <person name="Kalnine N."/>
            <person name="Chen X."/>
            <person name="Rolfs A."/>
            <person name="Halleck A."/>
            <person name="Hines L."/>
            <person name="Eisenstein S."/>
            <person name="Koundinya M."/>
            <person name="Raphael J."/>
            <person name="Moreira D."/>
            <person name="Kelley T."/>
            <person name="LaBaer J."/>
            <person name="Lin Y."/>
            <person name="Phelan M."/>
            <person name="Farmer A."/>
        </authorList>
    </citation>
    <scope>NUCLEOTIDE SEQUENCE [LARGE SCALE MRNA]</scope>
</reference>
<reference key="3">
    <citation type="journal article" date="2004" name="Genome Res.">
        <title>The status, quality, and expansion of the NIH full-length cDNA project: the Mammalian Gene Collection (MGC).</title>
        <authorList>
            <consortium name="The MGC Project Team"/>
        </authorList>
    </citation>
    <scope>NUCLEOTIDE SEQUENCE [LARGE SCALE MRNA]</scope>
    <source>
        <tissue>Colon</tissue>
        <tissue>Eye</tissue>
    </source>
</reference>
<reference key="4">
    <citation type="journal article" date="2006" name="Nature">
        <title>The DNA sequence, annotation and analysis of human chromosome 3.</title>
        <authorList>
            <person name="Muzny D.M."/>
            <person name="Scherer S.E."/>
            <person name="Kaul R."/>
            <person name="Wang J."/>
            <person name="Yu J."/>
            <person name="Sudbrak R."/>
            <person name="Buhay C.J."/>
            <person name="Chen R."/>
            <person name="Cree A."/>
            <person name="Ding Y."/>
            <person name="Dugan-Rocha S."/>
            <person name="Gill R."/>
            <person name="Gunaratne P."/>
            <person name="Harris R.A."/>
            <person name="Hawes A.C."/>
            <person name="Hernandez J."/>
            <person name="Hodgson A.V."/>
            <person name="Hume J."/>
            <person name="Jackson A."/>
            <person name="Khan Z.M."/>
            <person name="Kovar-Smith C."/>
            <person name="Lewis L.R."/>
            <person name="Lozado R.J."/>
            <person name="Metzker M.L."/>
            <person name="Milosavljevic A."/>
            <person name="Miner G.R."/>
            <person name="Morgan M.B."/>
            <person name="Nazareth L.V."/>
            <person name="Scott G."/>
            <person name="Sodergren E."/>
            <person name="Song X.-Z."/>
            <person name="Steffen D."/>
            <person name="Wei S."/>
            <person name="Wheeler D.A."/>
            <person name="Wright M.W."/>
            <person name="Worley K.C."/>
            <person name="Yuan Y."/>
            <person name="Zhang Z."/>
            <person name="Adams C.Q."/>
            <person name="Ansari-Lari M.A."/>
            <person name="Ayele M."/>
            <person name="Brown M.J."/>
            <person name="Chen G."/>
            <person name="Chen Z."/>
            <person name="Clendenning J."/>
            <person name="Clerc-Blankenburg K.P."/>
            <person name="Chen R."/>
            <person name="Chen Z."/>
            <person name="Davis C."/>
            <person name="Delgado O."/>
            <person name="Dinh H.H."/>
            <person name="Dong W."/>
            <person name="Draper H."/>
            <person name="Ernst S."/>
            <person name="Fu G."/>
            <person name="Gonzalez-Garay M.L."/>
            <person name="Garcia D.K."/>
            <person name="Gillett W."/>
            <person name="Gu J."/>
            <person name="Hao B."/>
            <person name="Haugen E."/>
            <person name="Havlak P."/>
            <person name="He X."/>
            <person name="Hennig S."/>
            <person name="Hu S."/>
            <person name="Huang W."/>
            <person name="Jackson L.R."/>
            <person name="Jacob L.S."/>
            <person name="Kelly S.H."/>
            <person name="Kube M."/>
            <person name="Levy R."/>
            <person name="Li Z."/>
            <person name="Liu B."/>
            <person name="Liu J."/>
            <person name="Liu W."/>
            <person name="Lu J."/>
            <person name="Maheshwari M."/>
            <person name="Nguyen B.-V."/>
            <person name="Okwuonu G.O."/>
            <person name="Palmeiri A."/>
            <person name="Pasternak S."/>
            <person name="Perez L.M."/>
            <person name="Phelps K.A."/>
            <person name="Plopper F.J."/>
            <person name="Qiang B."/>
            <person name="Raymond C."/>
            <person name="Rodriguez R."/>
            <person name="Saenphimmachak C."/>
            <person name="Santibanez J."/>
            <person name="Shen H."/>
            <person name="Shen Y."/>
            <person name="Subramanian S."/>
            <person name="Tabor P.E."/>
            <person name="Verduzco D."/>
            <person name="Waldron L."/>
            <person name="Wang J."/>
            <person name="Wang J."/>
            <person name="Wang Q."/>
            <person name="Williams G.A."/>
            <person name="Wong G.K.-S."/>
            <person name="Yao Z."/>
            <person name="Zhang J."/>
            <person name="Zhang X."/>
            <person name="Zhao G."/>
            <person name="Zhou J."/>
            <person name="Zhou Y."/>
            <person name="Nelson D."/>
            <person name="Lehrach H."/>
            <person name="Reinhardt R."/>
            <person name="Naylor S.L."/>
            <person name="Yang H."/>
            <person name="Olson M."/>
            <person name="Weinstock G."/>
            <person name="Gibbs R.A."/>
        </authorList>
    </citation>
    <scope>NUCLEOTIDE SEQUENCE [LARGE SCALE GENOMIC DNA]</scope>
</reference>
<reference key="5">
    <citation type="journal article" date="2003" name="Nat. Biotechnol.">
        <title>Exploring proteomes and analyzing protein processing by mass spectrometric identification of sorted N-terminal peptides.</title>
        <authorList>
            <person name="Gevaert K."/>
            <person name="Goethals M."/>
            <person name="Martens L."/>
            <person name="Van Damme J."/>
            <person name="Staes A."/>
            <person name="Thomas G.R."/>
            <person name="Vandekerckhove J."/>
        </authorList>
    </citation>
    <scope>PROTEIN SEQUENCE OF 25-39</scope>
    <source>
        <tissue>Platelet</tissue>
    </source>
</reference>
<reference key="6">
    <citation type="journal article" date="2003" name="J. Mol. Neurosci.">
        <title>MANF: a new mesencephalic, astrocyte-derived neurotrophic factor with selectivity for dopaminergic neurons.</title>
        <authorList>
            <person name="Petrova P."/>
            <person name="Raibekas A."/>
            <person name="Pevsner J."/>
            <person name="Vigo N."/>
            <person name="Anafi M."/>
            <person name="Moore M.K."/>
            <person name="Peaire A.E."/>
            <person name="Shridhar V."/>
            <person name="Smith D.I."/>
            <person name="Kelly J."/>
            <person name="Durocher Y."/>
            <person name="Commissiong J.W."/>
        </authorList>
    </citation>
    <scope>PROTEIN SEQUENCE OF 25-29</scope>
    <scope>FUNCTION</scope>
    <scope>SUBCELLULAR LOCATION</scope>
    <scope>GLYCOSYLATION</scope>
</reference>
<reference key="7">
    <citation type="journal article" date="2004" name="Anal. Chem.">
        <title>Robust phosphoproteomic profiling of tyrosine phosphorylation sites from human T cells using immobilized metal affinity chromatography and tandem mass spectrometry.</title>
        <authorList>
            <person name="Brill L.M."/>
            <person name="Salomon A.R."/>
            <person name="Ficarro S.B."/>
            <person name="Mukherji M."/>
            <person name="Stettler-Gill M."/>
            <person name="Peters E.C."/>
        </authorList>
    </citation>
    <scope>IDENTIFICATION BY MASS SPECTROMETRY [LARGE SCALE ANALYSIS]</scope>
    <source>
        <tissue>Leukemic T-cell</tissue>
    </source>
</reference>
<reference key="8">
    <citation type="journal article" date="2008" name="Exp. Cell Res.">
        <title>Armet, a UPR-upregulated protein, inhibits cell proliferation and ER stress-induced cell death.</title>
        <authorList>
            <person name="Apostolou A."/>
            <person name="Shen Y."/>
            <person name="Liang Y."/>
            <person name="Luo J."/>
            <person name="Fang S."/>
        </authorList>
    </citation>
    <scope>FUNCTION</scope>
    <scope>SUBCELLULAR LOCATION</scope>
    <scope>INDUCTION</scope>
</reference>
<reference key="9">
    <citation type="journal article" date="2011" name="BMC Syst. Biol.">
        <title>Initial characterization of the human central proteome.</title>
        <authorList>
            <person name="Burkard T.R."/>
            <person name="Planyavsky M."/>
            <person name="Kaupe I."/>
            <person name="Breitwieser F.P."/>
            <person name="Buerckstuemmer T."/>
            <person name="Bennett K.L."/>
            <person name="Superti-Furga G."/>
            <person name="Colinge J."/>
        </authorList>
    </citation>
    <scope>IDENTIFICATION BY MASS SPECTROMETRY [LARGE SCALE ANALYSIS]</scope>
</reference>
<reference key="10">
    <citation type="journal article" date="2012" name="J. Biol. Chem.">
        <title>Mesencephalic astrocyte-derived neurotrophic factor protects the heart from ischemic damage and is selectively secreted upon sarco/endoplasmic reticulum calcium depletion.</title>
        <authorList>
            <person name="Glembotski C.C."/>
            <person name="Thuerauf D.J."/>
            <person name="Huang C."/>
            <person name="Vekich J.A."/>
            <person name="Gottlieb R.A."/>
            <person name="Doroudgar S."/>
        </authorList>
    </citation>
    <scope>FUNCTION</scope>
    <scope>INTERACTION WITH HSPA5</scope>
    <scope>SUBCELLULAR LOCATION</scope>
    <scope>INDUCTION</scope>
    <scope>MUTAGENESIS OF 179-ARG--LYS-182 AND ARG-179</scope>
</reference>
<reference key="11">
    <citation type="journal article" date="2014" name="J. Proteomics">
        <title>An enzyme assisted RP-RPLC approach for in-depth analysis of human liver phosphoproteome.</title>
        <authorList>
            <person name="Bian Y."/>
            <person name="Song C."/>
            <person name="Cheng K."/>
            <person name="Dong M."/>
            <person name="Wang F."/>
            <person name="Huang J."/>
            <person name="Sun D."/>
            <person name="Wang L."/>
            <person name="Ye M."/>
            <person name="Zou H."/>
        </authorList>
    </citation>
    <scope>IDENTIFICATION BY MASS SPECTROMETRY [LARGE SCALE ANALYSIS]</scope>
    <source>
        <tissue>Liver</tissue>
    </source>
</reference>
<reference key="12">
    <citation type="journal article" date="2015" name="Proteomics">
        <title>N-terminome analysis of the human mitochondrial proteome.</title>
        <authorList>
            <person name="Vaca Jacome A.S."/>
            <person name="Rabilloud T."/>
            <person name="Schaeffer-Reiss C."/>
            <person name="Rompais M."/>
            <person name="Ayoub D."/>
            <person name="Lane L."/>
            <person name="Bairoch A."/>
            <person name="Van Dorsselaer A."/>
            <person name="Carapito C."/>
        </authorList>
    </citation>
    <scope>IDENTIFICATION BY MASS SPECTROMETRY [LARGE SCALE ANALYSIS]</scope>
</reference>
<reference key="13">
    <citation type="journal article" date="2018" name="Nat. Commun.">
        <title>Conserved roles of C. elegans and human MANFs in sulfatide binding and cytoprotection.</title>
        <authorList>
            <person name="Bai M."/>
            <person name="Vozdek R."/>
            <person name="Hnizda A."/>
            <person name="Jiang C."/>
            <person name="Wang B."/>
            <person name="Kuchar L."/>
            <person name="Li T."/>
            <person name="Zhang Y."/>
            <person name="Wood C."/>
            <person name="Feng L."/>
            <person name="Dang Y."/>
            <person name="Ma D.K."/>
        </authorList>
    </citation>
    <scope>FUNCTION</scope>
    <scope>SUBCELLULAR LOCATION</scope>
    <scope>INDUCTION</scope>
    <scope>DOMAIN</scope>
    <scope>MUTAGENESIS OF LYS-112</scope>
</reference>
<reference key="14">
    <citation type="journal article" date="2023" name="Cell Rep.">
        <title>MANF regulates neuronal survival and UPR through its ER-located receptor IRE1alpha.</title>
        <authorList>
            <person name="Kovaleva V."/>
            <person name="Yu L.Y."/>
            <person name="Ivanova L."/>
            <person name="Shpironok O."/>
            <person name="Nam J."/>
            <person name="Eesmaa A."/>
            <person name="Kumpula E.P."/>
            <person name="Sakson S."/>
            <person name="Toots U."/>
            <person name="Ustav M."/>
            <person name="Huiskonen J.T."/>
            <person name="Voutilainen M.H."/>
            <person name="Lindholm P."/>
            <person name="Karelson M."/>
            <person name="Saarma M."/>
        </authorList>
    </citation>
    <scope>FUNCTION</scope>
    <scope>INTERACTION WITH ERN1</scope>
    <scope>INDUCTION</scope>
</reference>
<reference key="15">
    <citation type="journal article" date="2009" name="Protein Eng. Des. Sel.">
        <title>The structure of the conserved neurotrophic factors MANF and CDNF explains why they are bifunctional.</title>
        <authorList>
            <person name="Parkash V."/>
            <person name="Lindholm P."/>
            <person name="Peranen J."/>
            <person name="Kalkkinen N."/>
            <person name="Oksanen E."/>
            <person name="Saarma M."/>
            <person name="Leppanen V.-M."/>
            <person name="Goldman A."/>
        </authorList>
    </citation>
    <scope>X-RAY CRYSTALLOGRAPHY (2.80 ANGSTROMS) OF 25-182</scope>
    <scope>DOMAIN</scope>
    <scope>DISULFIDE BONDS</scope>
</reference>
<reference key="16">
    <citation type="journal article" date="1996" name="Cancer Res.">
        <title>Mutations in the arginine-rich protein gene, in lung, breast, and prostate cancers, and in squamous cell carcinoma of the head and neck.</title>
        <authorList>
            <person name="Shridhar R."/>
            <person name="Shridhar V."/>
            <person name="Rivard S."/>
            <person name="Siegfried J.M."/>
            <person name="Pietraszkiewicz H."/>
            <person name="Ensley J."/>
            <person name="Pauley R."/>
            <person name="Grignon D."/>
            <person name="Sakr W."/>
            <person name="Miller O.J."/>
            <person name="Smith D.I."/>
        </authorList>
    </citation>
    <scope>DISCUSSION OF A PUTATIVE CANCER VARIANT</scope>
</reference>
<reference key="17">
    <citation type="journal article" date="1997" name="Oncogene">
        <title>Mutations in the arginine-rich protein gene (ARP) in pancreatic cancer.</title>
        <authorList>
            <person name="Shridhar V."/>
            <person name="Rivard S."/>
            <person name="Wang X."/>
            <person name="Shridhar R."/>
            <person name="Paisley C."/>
            <person name="Mullins C."/>
            <person name="Beirnat L."/>
            <person name="Dugan M."/>
            <person name="Sarkar F."/>
            <person name="Miller O.J."/>
            <person name="Vaitkevicius V.K."/>
            <person name="Smith D.I."/>
        </authorList>
    </citation>
    <scope>DISCUSSION OF PUTATIVE CANCER VARIANTS</scope>
</reference>
<reference key="18">
    <citation type="journal article" date="2015" name="Hum. Genet.">
        <title>High diagnostic yield of clinical exome sequencing in Middle Eastern patients with Mendelian disorders.</title>
        <authorList>
            <person name="Yavarna T."/>
            <person name="Al-Dewik N."/>
            <person name="Al-Mureikhi M."/>
            <person name="Ali R."/>
            <person name="Al-Mesaifri F."/>
            <person name="Mahmoud L."/>
            <person name="Shahbeck N."/>
            <person name="Lakhani S."/>
            <person name="AlMulla M."/>
            <person name="Nawaz Z."/>
            <person name="Vitazka P."/>
            <person name="Alkuraya F.S."/>
            <person name="Ben-Omran T."/>
        </authorList>
    </citation>
    <scope>INVOLVEMENT IN DDDS</scope>
</reference>
<reference key="19">
    <citation type="journal article" date="2021" name="Diabetes">
        <title>Loss of MANF causes childhood-onset syndromic diabetes due to increased endoplasmic reticulum stress.</title>
        <authorList>
            <person name="Montaser H."/>
            <person name="Patel K.A."/>
            <person name="Balboa D."/>
            <person name="Ibrahim H."/>
            <person name="Lithovius V."/>
            <person name="Naeaetaenen A."/>
            <person name="Chandra V."/>
            <person name="Demir K."/>
            <person name="Acar S."/>
            <person name="Ben-Omran T."/>
            <person name="Colclough K."/>
            <person name="Locke J.M."/>
            <person name="Wakeling M."/>
            <person name="Lindahl M."/>
            <person name="Hattersley A.T."/>
            <person name="Saarimaeki-Vire J."/>
            <person name="Otonkoski T."/>
        </authorList>
    </citation>
    <scope>INVOLVEMENT IN DDDS</scope>
</reference>
<sequence length="182" mass="20700">MRRMWATQGLAVALALSVLPGSRALRPGDCEVCISYLGRFYQDLKDRDVTFSPATIENELIKFCREARGKENRLCYYIGATDDAATKIINEVSKPLAHHIPVEKICEKLKKKDSQICELKYDKQIDLSTVDLKKLRVKELKKILDDWGETCKGCAEKSDYIRKINELMPKYAPKAASARTDL</sequence>
<accession>P55145</accession>
<accession>Q14CX4</accession>
<accession>Q86U67</accession>
<accession>Q96IS4</accession>
<feature type="signal peptide" evidence="3 4">
    <location>
        <begin position="1"/>
        <end position="24"/>
    </location>
</feature>
<feature type="chain" id="PRO_0000002305" description="Mesencephalic astrocyte-derived neurotrophic factor">
    <location>
        <begin position="25"/>
        <end position="182"/>
    </location>
</feature>
<feature type="region of interest" description="Interacts with ERN1, EIF2AK3 and ATF6" evidence="11">
    <location>
        <begin position="96"/>
        <end position="158"/>
    </location>
</feature>
<feature type="region of interest" description="Interacts with HSPA5" evidence="2">
    <location>
        <begin position="129"/>
        <end position="172"/>
    </location>
</feature>
<feature type="modified residue" description="Phosphotyrosine" evidence="2">
    <location>
        <position position="76"/>
    </location>
</feature>
<feature type="disulfide bond" evidence="6">
    <location>
        <begin position="30"/>
        <end position="117"/>
    </location>
</feature>
<feature type="disulfide bond" evidence="6">
    <location>
        <begin position="33"/>
        <end position="106"/>
    </location>
</feature>
<feature type="disulfide bond" evidence="6">
    <location>
        <begin position="64"/>
        <end position="75"/>
    </location>
</feature>
<feature type="disulfide bond" evidence="6">
    <location>
        <begin position="151"/>
        <end position="154"/>
    </location>
</feature>
<feature type="mutagenesis site" description="Reduced sulfatide binding and uptake by target cells. Reduces cytoprotective effect of the wild-type protein. Attenuates stress granule formation in response to endoplasmic reticulum stress." evidence="9">
    <original>K</original>
    <variation>L</variation>
    <location>
        <position position="112"/>
    </location>
</feature>
<feature type="mutagenesis site" description="Two-fold increase in secretion." evidence="7">
    <location>
        <begin position="179"/>
        <end position="182"/>
    </location>
</feature>
<feature type="mutagenesis site" description="14-fold decrease in secretion." evidence="7">
    <original>R</original>
    <variation>K</variation>
    <location>
        <position position="179"/>
    </location>
</feature>
<feature type="sequence conflict" description="In Ref. 1; AAB08753." evidence="12" ref="1">
    <original>AL</original>
    <variation>RV</variation>
    <location>
        <begin position="13"/>
        <end position="14"/>
    </location>
</feature>
<feature type="sequence conflict" description="In Ref. 1; AAB08753." evidence="12" ref="1">
    <original>R</original>
    <variation>P</variation>
    <location>
        <position position="179"/>
    </location>
</feature>
<feature type="helix" evidence="16">
    <location>
        <begin position="31"/>
        <end position="46"/>
    </location>
</feature>
<feature type="helix" evidence="16">
    <location>
        <begin position="53"/>
        <end position="64"/>
    </location>
</feature>
<feature type="helix" evidence="16">
    <location>
        <begin position="69"/>
        <end position="77"/>
    </location>
</feature>
<feature type="strand" evidence="16">
    <location>
        <begin position="81"/>
        <end position="83"/>
    </location>
</feature>
<feature type="helix" evidence="16">
    <location>
        <begin position="87"/>
        <end position="89"/>
    </location>
</feature>
<feature type="helix" evidence="16">
    <location>
        <begin position="90"/>
        <end position="97"/>
    </location>
</feature>
<feature type="helix" evidence="16">
    <location>
        <begin position="102"/>
        <end position="112"/>
    </location>
</feature>
<feature type="turn" evidence="16">
    <location>
        <begin position="115"/>
        <end position="118"/>
    </location>
</feature>
<feature type="helix" evidence="15">
    <location>
        <begin position="127"/>
        <end position="129"/>
    </location>
</feature>
<feature type="turn" evidence="15">
    <location>
        <begin position="132"/>
        <end position="134"/>
    </location>
</feature>
<feature type="helix" evidence="16">
    <location>
        <begin position="136"/>
        <end position="143"/>
    </location>
</feature>
<feature type="helix" evidence="16">
    <location>
        <begin position="155"/>
        <end position="158"/>
    </location>
</feature>
<feature type="turn" evidence="15">
    <location>
        <begin position="166"/>
        <end position="173"/>
    </location>
</feature>
<evidence type="ECO:0000250" key="1">
    <source>
        <dbReference type="UniProtKB" id="P0C5H9"/>
    </source>
</evidence>
<evidence type="ECO:0000250" key="2">
    <source>
        <dbReference type="UniProtKB" id="Q9CXI5"/>
    </source>
</evidence>
<evidence type="ECO:0000269" key="3">
    <source>
    </source>
</evidence>
<evidence type="ECO:0000269" key="4">
    <source>
    </source>
</evidence>
<evidence type="ECO:0000269" key="5">
    <source>
    </source>
</evidence>
<evidence type="ECO:0000269" key="6">
    <source>
    </source>
</evidence>
<evidence type="ECO:0000269" key="7">
    <source>
    </source>
</evidence>
<evidence type="ECO:0000269" key="8">
    <source>
    </source>
</evidence>
<evidence type="ECO:0000269" key="9">
    <source>
    </source>
</evidence>
<evidence type="ECO:0000269" key="10">
    <source>
    </source>
</evidence>
<evidence type="ECO:0000269" key="11">
    <source>
    </source>
</evidence>
<evidence type="ECO:0000305" key="12"/>
<evidence type="ECO:0000305" key="13">
    <source>
    </source>
</evidence>
<evidence type="ECO:0000312" key="14">
    <source>
        <dbReference type="HGNC" id="HGNC:15461"/>
    </source>
</evidence>
<evidence type="ECO:0007829" key="15">
    <source>
        <dbReference type="PDB" id="2KVD"/>
    </source>
</evidence>
<evidence type="ECO:0007829" key="16">
    <source>
        <dbReference type="PDB" id="2W51"/>
    </source>
</evidence>
<gene>
    <name evidence="14" type="primary">MANF</name>
    <name type="synonym">ARMET</name>
    <name type="synonym">ARP</name>
</gene>
<dbReference type="EMBL" id="M83751">
    <property type="protein sequence ID" value="AAB08753.1"/>
    <property type="status" value="ALT_INIT"/>
    <property type="molecule type" value="mRNA"/>
</dbReference>
<dbReference type="EMBL" id="BT007110">
    <property type="protein sequence ID" value="AAP35774.1"/>
    <property type="molecule type" value="mRNA"/>
</dbReference>
<dbReference type="EMBL" id="AC092037">
    <property type="status" value="NOT_ANNOTATED_CDS"/>
    <property type="molecule type" value="Genomic_DNA"/>
</dbReference>
<dbReference type="EMBL" id="BC007282">
    <property type="protein sequence ID" value="AAH07282.1"/>
    <property type="molecule type" value="mRNA"/>
</dbReference>
<dbReference type="EMBL" id="BC113588">
    <property type="protein sequence ID" value="AAI13589.1"/>
    <property type="status" value="ALT_INIT"/>
    <property type="molecule type" value="mRNA"/>
</dbReference>
<dbReference type="EMBL" id="BC113590">
    <property type="protein sequence ID" value="AAI13591.1"/>
    <property type="status" value="ALT_INIT"/>
    <property type="molecule type" value="mRNA"/>
</dbReference>
<dbReference type="CCDS" id="CCDS46836.4"/>
<dbReference type="RefSeq" id="NP_006001.5">
    <property type="nucleotide sequence ID" value="NM_006010.6"/>
</dbReference>
<dbReference type="PDB" id="2KVD">
    <property type="method" value="NMR"/>
    <property type="chains" value="A=25-182"/>
</dbReference>
<dbReference type="PDB" id="2KVE">
    <property type="method" value="NMR"/>
    <property type="chains" value="A=120-182"/>
</dbReference>
<dbReference type="PDB" id="2W51">
    <property type="method" value="X-ray"/>
    <property type="resolution" value="2.80 A"/>
    <property type="chains" value="A=25-182"/>
</dbReference>
<dbReference type="PDBsum" id="2KVD"/>
<dbReference type="PDBsum" id="2KVE"/>
<dbReference type="PDBsum" id="2W51"/>
<dbReference type="SMR" id="P55145"/>
<dbReference type="BioGRID" id="113621">
    <property type="interactions" value="123"/>
</dbReference>
<dbReference type="FunCoup" id="P55145">
    <property type="interactions" value="1691"/>
</dbReference>
<dbReference type="IntAct" id="P55145">
    <property type="interactions" value="48"/>
</dbReference>
<dbReference type="MINT" id="P55145"/>
<dbReference type="STRING" id="9606.ENSP00000499582"/>
<dbReference type="GlyGen" id="P55145">
    <property type="glycosylation" value="1 site, 1 O-linked glycan (1 site)"/>
</dbReference>
<dbReference type="iPTMnet" id="P55145"/>
<dbReference type="MetOSite" id="P55145"/>
<dbReference type="PhosphoSitePlus" id="P55145"/>
<dbReference type="SwissPalm" id="P55145"/>
<dbReference type="BioMuta" id="MANF"/>
<dbReference type="DMDM" id="332278201"/>
<dbReference type="OGP" id="P55145"/>
<dbReference type="CPTAC" id="CPTAC-403"/>
<dbReference type="CPTAC" id="CPTAC-404"/>
<dbReference type="jPOST" id="P55145"/>
<dbReference type="MassIVE" id="P55145"/>
<dbReference type="PaxDb" id="9606-ENSP00000432799"/>
<dbReference type="PeptideAtlas" id="P55145"/>
<dbReference type="ProteomicsDB" id="56793"/>
<dbReference type="Pumba" id="P55145"/>
<dbReference type="Antibodypedia" id="2505">
    <property type="antibodies" value="367 antibodies from 35 providers"/>
</dbReference>
<dbReference type="DNASU" id="7873"/>
<dbReference type="Ensembl" id="ENST00000528157.7">
    <property type="protein sequence ID" value="ENSP00000432799.3"/>
    <property type="gene ID" value="ENSG00000145050.19"/>
</dbReference>
<dbReference type="GeneID" id="7873"/>
<dbReference type="KEGG" id="hsa:7873"/>
<dbReference type="MANE-Select" id="ENST00000528157.7">
    <property type="protein sequence ID" value="ENSP00000432799.3"/>
    <property type="RefSeq nucleotide sequence ID" value="NM_006010.6"/>
    <property type="RefSeq protein sequence ID" value="NP_006001.5"/>
</dbReference>
<dbReference type="UCSC" id="uc003dbc.4">
    <property type="organism name" value="human"/>
</dbReference>
<dbReference type="AGR" id="HGNC:15461"/>
<dbReference type="CTD" id="7873"/>
<dbReference type="DisGeNET" id="7873"/>
<dbReference type="GeneCards" id="MANF"/>
<dbReference type="HGNC" id="HGNC:15461">
    <property type="gene designation" value="MANF"/>
</dbReference>
<dbReference type="HPA" id="ENSG00000145050">
    <property type="expression patterns" value="Low tissue specificity"/>
</dbReference>
<dbReference type="MalaCards" id="MANF"/>
<dbReference type="MIM" id="601916">
    <property type="type" value="gene"/>
</dbReference>
<dbReference type="MIM" id="620651">
    <property type="type" value="phenotype"/>
</dbReference>
<dbReference type="neXtProt" id="NX_P55145"/>
<dbReference type="OpenTargets" id="ENSG00000145050"/>
<dbReference type="PharmGKB" id="PA24993"/>
<dbReference type="VEuPathDB" id="HostDB:ENSG00000145050"/>
<dbReference type="eggNOG" id="KOG4154">
    <property type="taxonomic scope" value="Eukaryota"/>
</dbReference>
<dbReference type="GeneTree" id="ENSGT00390000007160"/>
<dbReference type="HOGENOM" id="CLU_099080_1_0_1"/>
<dbReference type="InParanoid" id="P55145"/>
<dbReference type="OMA" id="EVCKGCA"/>
<dbReference type="OrthoDB" id="5597848at2759"/>
<dbReference type="PAN-GO" id="P55145">
    <property type="GO annotations" value="4 GO annotations based on evolutionary models"/>
</dbReference>
<dbReference type="PhylomeDB" id="P55145"/>
<dbReference type="TreeFam" id="TF314252"/>
<dbReference type="PathwayCommons" id="P55145"/>
<dbReference type="Reactome" id="R-HSA-114608">
    <property type="pathway name" value="Platelet degranulation"/>
</dbReference>
<dbReference type="SignaLink" id="P55145"/>
<dbReference type="BioGRID-ORCS" id="7873">
    <property type="hits" value="206 hits in 1155 CRISPR screens"/>
</dbReference>
<dbReference type="CD-CODE" id="91857CE7">
    <property type="entry name" value="Nucleolus"/>
</dbReference>
<dbReference type="ChiTaRS" id="MANF">
    <property type="organism name" value="human"/>
</dbReference>
<dbReference type="EvolutionaryTrace" id="P55145"/>
<dbReference type="GeneWiki" id="ARMET"/>
<dbReference type="GenomeRNAi" id="7873"/>
<dbReference type="Pharos" id="P55145">
    <property type="development level" value="Tbio"/>
</dbReference>
<dbReference type="PRO" id="PR:P55145"/>
<dbReference type="Proteomes" id="UP000005640">
    <property type="component" value="Chromosome 3"/>
</dbReference>
<dbReference type="RNAct" id="P55145">
    <property type="molecule type" value="protein"/>
</dbReference>
<dbReference type="Bgee" id="ENSG00000145050">
    <property type="expression patterns" value="Expressed in islet of Langerhans and 199 other cell types or tissues"/>
</dbReference>
<dbReference type="ExpressionAtlas" id="P55145">
    <property type="expression patterns" value="baseline and differential"/>
</dbReference>
<dbReference type="GO" id="GO:0005829">
    <property type="term" value="C:cytosol"/>
    <property type="evidence" value="ECO:0000304"/>
    <property type="project" value="Reactome"/>
</dbReference>
<dbReference type="GO" id="GO:0005783">
    <property type="term" value="C:endoplasmic reticulum"/>
    <property type="evidence" value="ECO:0000318"/>
    <property type="project" value="GO_Central"/>
</dbReference>
<dbReference type="GO" id="GO:0005788">
    <property type="term" value="C:endoplasmic reticulum lumen"/>
    <property type="evidence" value="ECO:0000314"/>
    <property type="project" value="UniProtKB"/>
</dbReference>
<dbReference type="GO" id="GO:0005576">
    <property type="term" value="C:extracellular region"/>
    <property type="evidence" value="ECO:0000304"/>
    <property type="project" value="Reactome"/>
</dbReference>
<dbReference type="GO" id="GO:0005615">
    <property type="term" value="C:extracellular space"/>
    <property type="evidence" value="ECO:0000318"/>
    <property type="project" value="GO_Central"/>
</dbReference>
<dbReference type="GO" id="GO:0005634">
    <property type="term" value="C:nucleus"/>
    <property type="evidence" value="ECO:0007005"/>
    <property type="project" value="UniProtKB"/>
</dbReference>
<dbReference type="GO" id="GO:0033018">
    <property type="term" value="C:sarcoplasmic reticulum lumen"/>
    <property type="evidence" value="ECO:0007669"/>
    <property type="project" value="UniProtKB-SubCell"/>
</dbReference>
<dbReference type="GO" id="GO:0008083">
    <property type="term" value="F:growth factor activity"/>
    <property type="evidence" value="ECO:0007669"/>
    <property type="project" value="UniProtKB-KW"/>
</dbReference>
<dbReference type="GO" id="GO:0003723">
    <property type="term" value="F:RNA binding"/>
    <property type="evidence" value="ECO:0007005"/>
    <property type="project" value="UniProtKB"/>
</dbReference>
<dbReference type="GO" id="GO:0120146">
    <property type="term" value="F:sulfatide binding"/>
    <property type="evidence" value="ECO:0000314"/>
    <property type="project" value="WormBase"/>
</dbReference>
<dbReference type="GO" id="GO:0036500">
    <property type="term" value="P:ATF6-mediated unfolded protein response"/>
    <property type="evidence" value="ECO:0000315"/>
    <property type="project" value="WormBase"/>
</dbReference>
<dbReference type="GO" id="GO:0071542">
    <property type="term" value="P:dopaminergic neuron differentiation"/>
    <property type="evidence" value="ECO:0000318"/>
    <property type="project" value="GO_Central"/>
</dbReference>
<dbReference type="GO" id="GO:0031175">
    <property type="term" value="P:neuron projection development"/>
    <property type="evidence" value="ECO:0000318"/>
    <property type="project" value="GO_Central"/>
</dbReference>
<dbReference type="GO" id="GO:1905897">
    <property type="term" value="P:regulation of response to endoplasmic reticulum stress"/>
    <property type="evidence" value="ECO:0000315"/>
    <property type="project" value="UniProtKB"/>
</dbReference>
<dbReference type="GO" id="GO:0002014">
    <property type="term" value="P:vasoconstriction of artery involved in ischemic response to lowering of systemic arterial blood pressure"/>
    <property type="evidence" value="ECO:0007669"/>
    <property type="project" value="Ensembl"/>
</dbReference>
<dbReference type="FunFam" id="1.10.225.10:FF:000003">
    <property type="entry name" value="Mesencephalic astrocyte-derived neurotrophic factor"/>
    <property type="match status" value="1"/>
</dbReference>
<dbReference type="FunFam" id="1.10.720.30:FF:000003">
    <property type="entry name" value="Mesencephalic astrocyte-derived neurotrophic factor"/>
    <property type="match status" value="1"/>
</dbReference>
<dbReference type="Gene3D" id="1.10.720.30">
    <property type="entry name" value="SAP domain"/>
    <property type="match status" value="1"/>
</dbReference>
<dbReference type="Gene3D" id="1.10.225.10">
    <property type="entry name" value="Saposin-like"/>
    <property type="match status" value="1"/>
</dbReference>
<dbReference type="InterPro" id="IPR045333">
    <property type="entry name" value="ARMET-like"/>
</dbReference>
<dbReference type="InterPro" id="IPR019345">
    <property type="entry name" value="ARMET_C"/>
</dbReference>
<dbReference type="InterPro" id="IPR045332">
    <property type="entry name" value="ARMET_N"/>
</dbReference>
<dbReference type="InterPro" id="IPR036361">
    <property type="entry name" value="SAP_dom_sf"/>
</dbReference>
<dbReference type="PANTHER" id="PTHR12990">
    <property type="entry name" value="ARMET-LIKE PROTEIN"/>
    <property type="match status" value="1"/>
</dbReference>
<dbReference type="PANTHER" id="PTHR12990:SF10">
    <property type="entry name" value="MESENCEPHALIC ASTROCYTE-DERIVED NEUROTROPHIC FACTOR"/>
    <property type="match status" value="1"/>
</dbReference>
<dbReference type="Pfam" id="PF10208">
    <property type="entry name" value="ARMET_C"/>
    <property type="match status" value="1"/>
</dbReference>
<dbReference type="Pfam" id="PF20145">
    <property type="entry name" value="ARMET_N"/>
    <property type="match status" value="1"/>
</dbReference>
<dbReference type="SUPFAM" id="SSF68906">
    <property type="entry name" value="SAP domain"/>
    <property type="match status" value="1"/>
</dbReference>
<name>MANF_HUMAN</name>
<organism>
    <name type="scientific">Homo sapiens</name>
    <name type="common">Human</name>
    <dbReference type="NCBI Taxonomy" id="9606"/>
    <lineage>
        <taxon>Eukaryota</taxon>
        <taxon>Metazoa</taxon>
        <taxon>Chordata</taxon>
        <taxon>Craniata</taxon>
        <taxon>Vertebrata</taxon>
        <taxon>Euteleostomi</taxon>
        <taxon>Mammalia</taxon>
        <taxon>Eutheria</taxon>
        <taxon>Euarchontoglires</taxon>
        <taxon>Primates</taxon>
        <taxon>Haplorrhini</taxon>
        <taxon>Catarrhini</taxon>
        <taxon>Hominidae</taxon>
        <taxon>Homo</taxon>
    </lineage>
</organism>
<protein>
    <recommendedName>
        <fullName evidence="12">Mesencephalic astrocyte-derived neurotrophic factor</fullName>
    </recommendedName>
    <alternativeName>
        <fullName>Arginine-rich protein</fullName>
    </alternativeName>
    <alternativeName>
        <fullName>Protein ARMET</fullName>
    </alternativeName>
</protein>
<comment type="function">
    <text evidence="1 2 4 5 7 9 11">Selectively promotes the survival of dopaminergic neurons of the ventral mid-brain (PubMed:12794311). Modulates GABAergic transmission to the dopaminergic neurons of the substantia nigra (By similarity). Enhances spontaneous, as well as evoked, GABAergic inhibitory postsynaptic currents in dopaminergic neurons (By similarity). Inhibits cell proliferation and endoplasmic reticulum (ER) stress-induced cell death (PubMed:18561914, PubMed:22637475, PubMed:29497057, PubMed:36739529). Retained in the ER/sarcoplasmic reticulum (SR) through association with the endoplasmic reticulum chaperone protein HSPA5 under normal conditions (PubMed:22637475). Stabilizes HSPA5/BiP in its substrate-bound ADP state, which facilitates HSPA5/BiP incorporation into chaperone-client complexes during endoplasmic reticulum stress, its interaction with HSPA5/BiP inhibits ATP binding to HSPA5/BiP and subsequent nucleotide exchange (By similarity). As a result acts as a repressor of the unfolded protein response (UPR) pathway (By similarity). Up-regulated and secreted by the ER/SR in response to ER stress and hypoxia (PubMed:22637475). Following secretion by the ER/SR, directly binds to 3-O-sulfogalactosylceramide, a lipid sulfatide in the outer cell membrane of target cells (PubMed:29497057). Sulfatide binding promotes its cellular uptake by endocytosis, and is required for its role in alleviating ER stress and cell toxicity under hypoxic and ER stress conditions (PubMed:29497057). Essential for embryonic lung development (By similarity). Required for the correct postnatal temporal and structural development of splenic white pulp (By similarity). Required for the repair-associated myeloid response in skeletal muscle, acts as a regulator of phenotypic transition towards prorepair macrophages in response to muscle injury and as a result limits excessive proinflammatory signaling (By similarity). Represses RELA expression and therefore NF-kB signaling in the myocardium, as a result limits macrophage infiltration of injured tissue and M1 macrophage differentiation in response to myocardial injury (By similarity). Required for endochondral ossification in long bones and the skull during postnatal development (By similarity).</text>
</comment>
<comment type="subunit">
    <text evidence="2 7 11">Interacts directly (via SAP domain) with HSPA5/BiP; the interaction inhibits ATP binding to HSPA5/BiP and subsequent nucleotide exchange (PubMed:22637475). Component of a complex containing at least CRELD2, MANF, MATN3 and PDIA4 (By similarity). Interacts (via C-terminus) with ERN1 (via luminal domain); the interaction is decreased in the presence of increasing concentrations of Ca(2+) (PubMed:36739529).</text>
</comment>
<comment type="interaction">
    <interactant intactId="EBI-1044104">
        <id>P55145</id>
    </interactant>
    <interactant intactId="EBI-10247136">
        <id>Q5TBC7</id>
        <label>BCL2L15</label>
    </interactant>
    <organismsDiffer>false</organismsDiffer>
    <experiments>2</experiments>
</comment>
<comment type="interaction">
    <interactant intactId="EBI-1044104">
        <id>P55145</id>
    </interactant>
    <interactant intactId="EBI-10180131">
        <id>Q16799-3</id>
        <label>RTN1</label>
    </interactant>
    <organismsDiffer>false</organismsDiffer>
    <experiments>4</experiments>
</comment>
<comment type="subcellular location">
    <subcellularLocation>
        <location evidence="4 5 7 9">Secreted</location>
    </subcellularLocation>
    <subcellularLocation>
        <location evidence="13">Endoplasmic reticulum lumen</location>
    </subcellularLocation>
    <subcellularLocation>
        <location evidence="7">Sarcoplasmic reticulum lumen</location>
    </subcellularLocation>
    <text evidence="7 9">Retained in the endoplasmic reticulum (ER), and sarcoplasmic reticulum (SR) under normal conditions (PubMed:22637475). Up-regulated and secreted by the ER/SR in response to ER stress and hypoxia (PubMed:22637475, PubMed:29497057).</text>
</comment>
<comment type="induction">
    <text evidence="5 7 9 11">By endoplasmic reticulum stress (PubMed:18561914, PubMed:22637475, PubMed:29497057). By hypoxia (PubMed:29497057). Induced by the ER stressor tunicamycin (PubMed:36739529).</text>
</comment>
<comment type="domain">
    <text evidence="6">The N-terminal region may be responsible for neurotrophic activity while the C-terminal region may play a role in the ER stress response.</text>
</comment>
<comment type="domain">
    <text evidence="9">The N-terminal region may be required for lipid sulfatide binding.</text>
</comment>
<comment type="PTM">
    <text>May contain sialic acid residues.</text>
</comment>
<comment type="disease" evidence="8 10">
    <disease id="DI-06812">
        <name>Diabetes, deafness, developmental delay, and short stature syndrome</name>
        <acronym>DDDS</acronym>
        <description>An autosomal recessive, multisystem disorder characterized by childhood-onset non-autoimmune diabetes mellitus, short stature, bilateral sensorineural deafness, developmental delay, mildly impaired intellectual development, and microcephaly.</description>
        <dbReference type="MIM" id="620651"/>
    </disease>
    <text>The disease is caused by variants affecting the gene represented in this entry.</text>
</comment>
<comment type="similarity">
    <text evidence="12">Belongs to the ARMET family.</text>
</comment>
<comment type="caution">
    <text evidence="12">Was originally (PubMed:8649854, PubMed:8971156, PubMed:9174057) thought to be much longer and included an arginine-rich region thought to be the target of cancer-causing mutations. All these mutations are in what is now thought to be the 5'-UTR of the mRNA.</text>
</comment>
<comment type="caution">
    <text evidence="12">It is uncertain whether Met-1 or Met-4 is the initiator.</text>
</comment>
<comment type="sequence caution" evidence="12">
    <conflict type="erroneous initiation">
        <sequence resource="EMBL-CDS" id="AAB08753"/>
    </conflict>
    <text>Extended N-terminus.</text>
</comment>
<comment type="sequence caution" evidence="12">
    <conflict type="erroneous initiation">
        <sequence resource="EMBL-CDS" id="AAI13589"/>
    </conflict>
    <text>Extended N-terminus.</text>
</comment>
<comment type="sequence caution" evidence="12">
    <conflict type="erroneous initiation">
        <sequence resource="EMBL-CDS" id="AAI13591"/>
    </conflict>
    <text>Extended N-terminus.</text>
</comment>
<proteinExistence type="evidence at protein level"/>